<sequence>MTKTIFISTKENTGSIQFQIVNFTKKICKLTNHLKLHKKDYLSQRGLRQMLGKRQRLLSYLSKINLTSYNDLILKLKIREAKKDLF</sequence>
<reference key="1">
    <citation type="journal article" date="2007" name="BMC Plant Biol.">
        <title>Complete plastid genome sequences suggest strong selection for retention of photosynthetic genes in the parasitic plant genus Cuscuta.</title>
        <authorList>
            <person name="McNeal J.R."/>
            <person name="Kuehl J.V."/>
            <person name="Boore J.L."/>
            <person name="dePamphilis C.W."/>
        </authorList>
    </citation>
    <scope>NUCLEOTIDE SEQUENCE [LARGE SCALE GENOMIC DNA]</scope>
</reference>
<evidence type="ECO:0000250" key="1"/>
<evidence type="ECO:0000305" key="2"/>
<protein>
    <recommendedName>
        <fullName evidence="2">Small ribosomal subunit protein uS15c</fullName>
    </recommendedName>
    <alternativeName>
        <fullName>30S ribosomal protein S15, plastid</fullName>
    </alternativeName>
</protein>
<name>RR15_CUSOB</name>
<accession>A8W3M7</accession>
<organism>
    <name type="scientific">Cuscuta obtusiflora</name>
    <name type="common">Peruvian dodder</name>
    <dbReference type="NCBI Taxonomy" id="437280"/>
    <lineage>
        <taxon>Eukaryota</taxon>
        <taxon>Viridiplantae</taxon>
        <taxon>Streptophyta</taxon>
        <taxon>Embryophyta</taxon>
        <taxon>Tracheophyta</taxon>
        <taxon>Spermatophyta</taxon>
        <taxon>Magnoliopsida</taxon>
        <taxon>eudicotyledons</taxon>
        <taxon>Gunneridae</taxon>
        <taxon>Pentapetalae</taxon>
        <taxon>asterids</taxon>
        <taxon>lamiids</taxon>
        <taxon>Solanales</taxon>
        <taxon>Convolvulaceae</taxon>
        <taxon>Cuscuteae</taxon>
        <taxon>Cuscuta</taxon>
        <taxon>Cuscuta subgen. Grammica</taxon>
        <taxon>Cuscuta sect. Cleistogrammica</taxon>
    </lineage>
</organism>
<geneLocation type="plastid"/>
<comment type="subunit">
    <text evidence="1">Part of the 30S ribosomal subunit.</text>
</comment>
<comment type="subcellular location">
    <subcellularLocation>
        <location>Plastid</location>
    </subcellularLocation>
</comment>
<comment type="similarity">
    <text evidence="2">Belongs to the universal ribosomal protein uS15 family.</text>
</comment>
<comment type="caution">
    <text evidence="2">Only inflorescences, fruits, starved seedlings and stressed stem tips are green in this organism.</text>
</comment>
<proteinExistence type="inferred from homology"/>
<feature type="chain" id="PRO_0000354252" description="Small ribosomal subunit protein uS15c">
    <location>
        <begin position="1"/>
        <end position="86"/>
    </location>
</feature>
<keyword id="KW-0934">Plastid</keyword>
<keyword id="KW-0687">Ribonucleoprotein</keyword>
<keyword id="KW-0689">Ribosomal protein</keyword>
<dbReference type="EMBL" id="EU189133">
    <property type="protein sequence ID" value="ABW20602.1"/>
    <property type="molecule type" value="Genomic_DNA"/>
</dbReference>
<dbReference type="RefSeq" id="YP_001531257.1">
    <property type="nucleotide sequence ID" value="NC_009949.1"/>
</dbReference>
<dbReference type="SMR" id="A8W3M7"/>
<dbReference type="GeneID" id="5714780"/>
<dbReference type="GO" id="GO:0009536">
    <property type="term" value="C:plastid"/>
    <property type="evidence" value="ECO:0007669"/>
    <property type="project" value="UniProtKB-SubCell"/>
</dbReference>
<dbReference type="GO" id="GO:1990904">
    <property type="term" value="C:ribonucleoprotein complex"/>
    <property type="evidence" value="ECO:0007669"/>
    <property type="project" value="UniProtKB-KW"/>
</dbReference>
<dbReference type="GO" id="GO:0005840">
    <property type="term" value="C:ribosome"/>
    <property type="evidence" value="ECO:0007669"/>
    <property type="project" value="UniProtKB-KW"/>
</dbReference>
<dbReference type="GO" id="GO:0003735">
    <property type="term" value="F:structural constituent of ribosome"/>
    <property type="evidence" value="ECO:0007669"/>
    <property type="project" value="InterPro"/>
</dbReference>
<dbReference type="GO" id="GO:0006412">
    <property type="term" value="P:translation"/>
    <property type="evidence" value="ECO:0007669"/>
    <property type="project" value="InterPro"/>
</dbReference>
<dbReference type="CDD" id="cd00353">
    <property type="entry name" value="Ribosomal_S15p_S13e"/>
    <property type="match status" value="1"/>
</dbReference>
<dbReference type="Gene3D" id="1.10.287.10">
    <property type="entry name" value="S15/NS1, RNA-binding"/>
    <property type="match status" value="1"/>
</dbReference>
<dbReference type="HAMAP" id="MF_01343_B">
    <property type="entry name" value="Ribosomal_uS15_B"/>
    <property type="match status" value="1"/>
</dbReference>
<dbReference type="InterPro" id="IPR000589">
    <property type="entry name" value="Ribosomal_uS15"/>
</dbReference>
<dbReference type="InterPro" id="IPR005290">
    <property type="entry name" value="Ribosomal_uS15_bac-type"/>
</dbReference>
<dbReference type="InterPro" id="IPR009068">
    <property type="entry name" value="uS15_NS1_RNA-bd_sf"/>
</dbReference>
<dbReference type="NCBIfam" id="TIGR00952">
    <property type="entry name" value="S15_bact"/>
    <property type="match status" value="1"/>
</dbReference>
<dbReference type="PANTHER" id="PTHR23321">
    <property type="entry name" value="RIBOSOMAL PROTEIN S15, BACTERIAL AND ORGANELLAR"/>
    <property type="match status" value="1"/>
</dbReference>
<dbReference type="PANTHER" id="PTHR23321:SF26">
    <property type="entry name" value="SMALL RIBOSOMAL SUBUNIT PROTEIN US15M"/>
    <property type="match status" value="1"/>
</dbReference>
<dbReference type="Pfam" id="PF00312">
    <property type="entry name" value="Ribosomal_S15"/>
    <property type="match status" value="1"/>
</dbReference>
<dbReference type="SMART" id="SM01387">
    <property type="entry name" value="Ribosomal_S15"/>
    <property type="match status" value="1"/>
</dbReference>
<dbReference type="SUPFAM" id="SSF47060">
    <property type="entry name" value="S15/NS1 RNA-binding domain"/>
    <property type="match status" value="1"/>
</dbReference>
<dbReference type="PROSITE" id="PS00362">
    <property type="entry name" value="RIBOSOMAL_S15"/>
    <property type="match status" value="1"/>
</dbReference>
<gene>
    <name type="primary">rps15</name>
</gene>